<comment type="function">
    <text evidence="2">Responsible for the 2-O-dephosphorylation of xylose in the glycosaminoglycan-protein linkage region of proteoglycans thereby regulating the amount of mature glycosaminoglycan (GAG) chains. Sulfated glycosaminoglycans (GAGs), including heparan sulfate and chondroitin sulfate, are synthesized on the so-called common GAG-protein linkage region (GlcUAbeta1-3Galbeta1-3Galbeta1-4Xylbeta1-O-Ser) of core proteins, which is formed by the stepwise addition of monosaccharide residues by the respective specific glycosyltransferases. Xylose 2-O-dephosphorylation during completion of linkage region formation is a prerequisite for the initiation and efficient elongation of the repeating disaccharide region of GAG chains.</text>
</comment>
<comment type="catalytic activity">
    <reaction evidence="2">
        <text>3-O-[beta-D-GlcA-(1-&gt;3)-beta-D-Gal-(1-&gt;3)-beta-D-Gal-(1-&gt;4)-beta-D-2-O-P-Xyl]-L-seryl-[protein] + H2O = 3-O-(beta-D-GlcA-(1-&gt;3)-beta-D-Gal-(1-&gt;3)-beta-D-Gal-(1-&gt;4)-beta-D-Xyl)-L-seryl-[protein] + phosphate</text>
        <dbReference type="Rhea" id="RHEA:56512"/>
        <dbReference type="Rhea" id="RHEA-COMP:12573"/>
        <dbReference type="Rhea" id="RHEA-COMP:14559"/>
        <dbReference type="ChEBI" id="CHEBI:15377"/>
        <dbReference type="ChEBI" id="CHEBI:43474"/>
        <dbReference type="ChEBI" id="CHEBI:132093"/>
        <dbReference type="ChEBI" id="CHEBI:140495"/>
    </reaction>
</comment>
<comment type="subunit">
    <text evidence="2">Interacts with B3GAT3; the interaction increases the 2-phosphoxylose phosphatase activity of PXYLP1 during completion of linkage region formation in a B3GAT3-mediated manner.</text>
</comment>
<comment type="subcellular location">
    <subcellularLocation>
        <location evidence="2">Golgi apparatus membrane</location>
        <topology evidence="3">Single-pass type II membrane protein</topology>
    </subcellularLocation>
    <text evidence="2">Colocalizes to Golgi apparatus in a B3GAT3-dependent manner.</text>
</comment>
<comment type="similarity">
    <text evidence="5">Belongs to the histidine acid phosphatase family.</text>
</comment>
<keyword id="KW-0325">Glycoprotein</keyword>
<keyword id="KW-0333">Golgi apparatus</keyword>
<keyword id="KW-0378">Hydrolase</keyword>
<keyword id="KW-0472">Membrane</keyword>
<keyword id="KW-1185">Reference proteome</keyword>
<keyword id="KW-0735">Signal-anchor</keyword>
<keyword id="KW-0812">Transmembrane</keyword>
<keyword id="KW-1133">Transmembrane helix</keyword>
<organism>
    <name type="scientific">Mus musculus</name>
    <name type="common">Mouse</name>
    <dbReference type="NCBI Taxonomy" id="10090"/>
    <lineage>
        <taxon>Eukaryota</taxon>
        <taxon>Metazoa</taxon>
        <taxon>Chordata</taxon>
        <taxon>Craniata</taxon>
        <taxon>Vertebrata</taxon>
        <taxon>Euteleostomi</taxon>
        <taxon>Mammalia</taxon>
        <taxon>Eutheria</taxon>
        <taxon>Euarchontoglires</taxon>
        <taxon>Glires</taxon>
        <taxon>Rodentia</taxon>
        <taxon>Myomorpha</taxon>
        <taxon>Muroidea</taxon>
        <taxon>Muridae</taxon>
        <taxon>Murinae</taxon>
        <taxon>Mus</taxon>
        <taxon>Mus</taxon>
    </lineage>
</organism>
<accession>Q8BHA9</accession>
<accession>Q8BZ12</accession>
<protein>
    <recommendedName>
        <fullName evidence="2">2-phosphoxylose phosphatase 1</fullName>
        <ecNumber evidence="2">3.1.3.-</ecNumber>
    </recommendedName>
    <alternativeName>
        <fullName>Acid phosphatase-like protein 2</fullName>
    </alternativeName>
</protein>
<proteinExistence type="evidence at transcript level"/>
<evidence type="ECO:0000250" key="1"/>
<evidence type="ECO:0000250" key="2">
    <source>
        <dbReference type="UniProtKB" id="Q8TE99"/>
    </source>
</evidence>
<evidence type="ECO:0000255" key="3"/>
<evidence type="ECO:0000255" key="4">
    <source>
        <dbReference type="PROSITE-ProRule" id="PRU00498"/>
    </source>
</evidence>
<evidence type="ECO:0000305" key="5"/>
<evidence type="ECO:0000312" key="6">
    <source>
        <dbReference type="MGI" id="MGI:2442444"/>
    </source>
</evidence>
<reference key="1">
    <citation type="journal article" date="2005" name="Science">
        <title>The transcriptional landscape of the mammalian genome.</title>
        <authorList>
            <person name="Carninci P."/>
            <person name="Kasukawa T."/>
            <person name="Katayama S."/>
            <person name="Gough J."/>
            <person name="Frith M.C."/>
            <person name="Maeda N."/>
            <person name="Oyama R."/>
            <person name="Ravasi T."/>
            <person name="Lenhard B."/>
            <person name="Wells C."/>
            <person name="Kodzius R."/>
            <person name="Shimokawa K."/>
            <person name="Bajic V.B."/>
            <person name="Brenner S.E."/>
            <person name="Batalov S."/>
            <person name="Forrest A.R."/>
            <person name="Zavolan M."/>
            <person name="Davis M.J."/>
            <person name="Wilming L.G."/>
            <person name="Aidinis V."/>
            <person name="Allen J.E."/>
            <person name="Ambesi-Impiombato A."/>
            <person name="Apweiler R."/>
            <person name="Aturaliya R.N."/>
            <person name="Bailey T.L."/>
            <person name="Bansal M."/>
            <person name="Baxter L."/>
            <person name="Beisel K.W."/>
            <person name="Bersano T."/>
            <person name="Bono H."/>
            <person name="Chalk A.M."/>
            <person name="Chiu K.P."/>
            <person name="Choudhary V."/>
            <person name="Christoffels A."/>
            <person name="Clutterbuck D.R."/>
            <person name="Crowe M.L."/>
            <person name="Dalla E."/>
            <person name="Dalrymple B.P."/>
            <person name="de Bono B."/>
            <person name="Della Gatta G."/>
            <person name="di Bernardo D."/>
            <person name="Down T."/>
            <person name="Engstrom P."/>
            <person name="Fagiolini M."/>
            <person name="Faulkner G."/>
            <person name="Fletcher C.F."/>
            <person name="Fukushima T."/>
            <person name="Furuno M."/>
            <person name="Futaki S."/>
            <person name="Gariboldi M."/>
            <person name="Georgii-Hemming P."/>
            <person name="Gingeras T.R."/>
            <person name="Gojobori T."/>
            <person name="Green R.E."/>
            <person name="Gustincich S."/>
            <person name="Harbers M."/>
            <person name="Hayashi Y."/>
            <person name="Hensch T.K."/>
            <person name="Hirokawa N."/>
            <person name="Hill D."/>
            <person name="Huminiecki L."/>
            <person name="Iacono M."/>
            <person name="Ikeo K."/>
            <person name="Iwama A."/>
            <person name="Ishikawa T."/>
            <person name="Jakt M."/>
            <person name="Kanapin A."/>
            <person name="Katoh M."/>
            <person name="Kawasawa Y."/>
            <person name="Kelso J."/>
            <person name="Kitamura H."/>
            <person name="Kitano H."/>
            <person name="Kollias G."/>
            <person name="Krishnan S.P."/>
            <person name="Kruger A."/>
            <person name="Kummerfeld S.K."/>
            <person name="Kurochkin I.V."/>
            <person name="Lareau L.F."/>
            <person name="Lazarevic D."/>
            <person name="Lipovich L."/>
            <person name="Liu J."/>
            <person name="Liuni S."/>
            <person name="McWilliam S."/>
            <person name="Madan Babu M."/>
            <person name="Madera M."/>
            <person name="Marchionni L."/>
            <person name="Matsuda H."/>
            <person name="Matsuzawa S."/>
            <person name="Miki H."/>
            <person name="Mignone F."/>
            <person name="Miyake S."/>
            <person name="Morris K."/>
            <person name="Mottagui-Tabar S."/>
            <person name="Mulder N."/>
            <person name="Nakano N."/>
            <person name="Nakauchi H."/>
            <person name="Ng P."/>
            <person name="Nilsson R."/>
            <person name="Nishiguchi S."/>
            <person name="Nishikawa S."/>
            <person name="Nori F."/>
            <person name="Ohara O."/>
            <person name="Okazaki Y."/>
            <person name="Orlando V."/>
            <person name="Pang K.C."/>
            <person name="Pavan W.J."/>
            <person name="Pavesi G."/>
            <person name="Pesole G."/>
            <person name="Petrovsky N."/>
            <person name="Piazza S."/>
            <person name="Reed J."/>
            <person name="Reid J.F."/>
            <person name="Ring B.Z."/>
            <person name="Ringwald M."/>
            <person name="Rost B."/>
            <person name="Ruan Y."/>
            <person name="Salzberg S.L."/>
            <person name="Sandelin A."/>
            <person name="Schneider C."/>
            <person name="Schoenbach C."/>
            <person name="Sekiguchi K."/>
            <person name="Semple C.A."/>
            <person name="Seno S."/>
            <person name="Sessa L."/>
            <person name="Sheng Y."/>
            <person name="Shibata Y."/>
            <person name="Shimada H."/>
            <person name="Shimada K."/>
            <person name="Silva D."/>
            <person name="Sinclair B."/>
            <person name="Sperling S."/>
            <person name="Stupka E."/>
            <person name="Sugiura K."/>
            <person name="Sultana R."/>
            <person name="Takenaka Y."/>
            <person name="Taki K."/>
            <person name="Tammoja K."/>
            <person name="Tan S.L."/>
            <person name="Tang S."/>
            <person name="Taylor M.S."/>
            <person name="Tegner J."/>
            <person name="Teichmann S.A."/>
            <person name="Ueda H.R."/>
            <person name="van Nimwegen E."/>
            <person name="Verardo R."/>
            <person name="Wei C.L."/>
            <person name="Yagi K."/>
            <person name="Yamanishi H."/>
            <person name="Zabarovsky E."/>
            <person name="Zhu S."/>
            <person name="Zimmer A."/>
            <person name="Hide W."/>
            <person name="Bult C."/>
            <person name="Grimmond S.M."/>
            <person name="Teasdale R.D."/>
            <person name="Liu E.T."/>
            <person name="Brusic V."/>
            <person name="Quackenbush J."/>
            <person name="Wahlestedt C."/>
            <person name="Mattick J.S."/>
            <person name="Hume D.A."/>
            <person name="Kai C."/>
            <person name="Sasaki D."/>
            <person name="Tomaru Y."/>
            <person name="Fukuda S."/>
            <person name="Kanamori-Katayama M."/>
            <person name="Suzuki M."/>
            <person name="Aoki J."/>
            <person name="Arakawa T."/>
            <person name="Iida J."/>
            <person name="Imamura K."/>
            <person name="Itoh M."/>
            <person name="Kato T."/>
            <person name="Kawaji H."/>
            <person name="Kawagashira N."/>
            <person name="Kawashima T."/>
            <person name="Kojima M."/>
            <person name="Kondo S."/>
            <person name="Konno H."/>
            <person name="Nakano K."/>
            <person name="Ninomiya N."/>
            <person name="Nishio T."/>
            <person name="Okada M."/>
            <person name="Plessy C."/>
            <person name="Shibata K."/>
            <person name="Shiraki T."/>
            <person name="Suzuki S."/>
            <person name="Tagami M."/>
            <person name="Waki K."/>
            <person name="Watahiki A."/>
            <person name="Okamura-Oho Y."/>
            <person name="Suzuki H."/>
            <person name="Kawai J."/>
            <person name="Hayashizaki Y."/>
        </authorList>
    </citation>
    <scope>NUCLEOTIDE SEQUENCE [LARGE SCALE MRNA]</scope>
    <source>
        <strain>C57BL/6J</strain>
        <tissue>Brain cortex</tissue>
        <tissue>Embryo</tissue>
        <tissue>Embryonic head</tissue>
        <tissue>Embryonic heart</tissue>
        <tissue>Lung</tissue>
        <tissue>Vagina</tissue>
    </source>
</reference>
<reference key="2">
    <citation type="journal article" date="2004" name="Genome Res.">
        <title>The status, quality, and expansion of the NIH full-length cDNA project: the Mammalian Gene Collection (MGC).</title>
        <authorList>
            <consortium name="The MGC Project Team"/>
        </authorList>
    </citation>
    <scope>NUCLEOTIDE SEQUENCE [LARGE SCALE MRNA]</scope>
    <source>
        <strain>FVB/N</strain>
        <tissue>Mammary tumor</tissue>
    </source>
</reference>
<feature type="chain" id="PRO_0000314925" description="2-phosphoxylose phosphatase 1">
    <location>
        <begin position="1"/>
        <end position="480"/>
    </location>
</feature>
<feature type="topological domain" description="Cytoplasmic" evidence="3">
    <location>
        <begin position="1"/>
        <end position="6"/>
    </location>
</feature>
<feature type="transmembrane region" description="Helical; Signal-anchor for type II membrane protein" evidence="3">
    <location>
        <begin position="7"/>
        <end position="27"/>
    </location>
</feature>
<feature type="topological domain" description="Lumenal" evidence="3">
    <location>
        <begin position="28"/>
        <end position="480"/>
    </location>
</feature>
<feature type="active site" description="Nucleophile" evidence="1">
    <location>
        <position position="97"/>
    </location>
</feature>
<feature type="active site" description="Proton donor" evidence="1">
    <location>
        <position position="379"/>
    </location>
</feature>
<feature type="glycosylation site" description="N-linked (GlcNAc...) asparagine" evidence="4">
    <location>
        <position position="194"/>
    </location>
</feature>
<feature type="glycosylation site" description="N-linked (GlcNAc...) asparagine" evidence="3">
    <location>
        <position position="305"/>
    </location>
</feature>
<feature type="glycosylation site" description="N-linked (GlcNAc...) asparagine" evidence="4">
    <location>
        <position position="354"/>
    </location>
</feature>
<feature type="sequence conflict" description="In Ref. 1; BAC29653." evidence="5" ref="1">
    <original>K</original>
    <variation>N</variation>
    <location>
        <position position="123"/>
    </location>
</feature>
<feature type="sequence conflict" description="In Ref. 1; BAC29653." evidence="5" ref="1">
    <original>L</original>
    <variation>H</variation>
    <location>
        <position position="374"/>
    </location>
</feature>
<dbReference type="EC" id="3.1.3.-" evidence="2"/>
<dbReference type="EMBL" id="AK036973">
    <property type="protein sequence ID" value="BAC29653.1"/>
    <property type="molecule type" value="mRNA"/>
</dbReference>
<dbReference type="EMBL" id="AK043758">
    <property type="protein sequence ID" value="BAC31644.1"/>
    <property type="molecule type" value="mRNA"/>
</dbReference>
<dbReference type="EMBL" id="AK082059">
    <property type="protein sequence ID" value="BAC38400.1"/>
    <property type="molecule type" value="mRNA"/>
</dbReference>
<dbReference type="EMBL" id="AK083712">
    <property type="protein sequence ID" value="BAC39001.1"/>
    <property type="molecule type" value="mRNA"/>
</dbReference>
<dbReference type="EMBL" id="AK084605">
    <property type="protein sequence ID" value="BAC39227.1"/>
    <property type="molecule type" value="mRNA"/>
</dbReference>
<dbReference type="EMBL" id="AK144699">
    <property type="protein sequence ID" value="BAE26021.1"/>
    <property type="molecule type" value="mRNA"/>
</dbReference>
<dbReference type="EMBL" id="AK164254">
    <property type="protein sequence ID" value="BAE37705.1"/>
    <property type="molecule type" value="mRNA"/>
</dbReference>
<dbReference type="EMBL" id="BC023960">
    <property type="protein sequence ID" value="AAH23960.1"/>
    <property type="molecule type" value="mRNA"/>
</dbReference>
<dbReference type="EMBL" id="BC036342">
    <property type="protein sequence ID" value="AAH36342.1"/>
    <property type="molecule type" value="mRNA"/>
</dbReference>
<dbReference type="CCDS" id="CCDS23418.1"/>
<dbReference type="RefSeq" id="NP_001276574.1">
    <property type="nucleotide sequence ID" value="NM_001289645.1"/>
</dbReference>
<dbReference type="RefSeq" id="NP_001276575.1">
    <property type="nucleotide sequence ID" value="NM_001289646.1"/>
</dbReference>
<dbReference type="RefSeq" id="NP_001276576.1">
    <property type="nucleotide sequence ID" value="NM_001289647.1"/>
</dbReference>
<dbReference type="RefSeq" id="NP_700469.1">
    <property type="nucleotide sequence ID" value="NM_153420.3"/>
</dbReference>
<dbReference type="RefSeq" id="XP_006511201.1">
    <property type="nucleotide sequence ID" value="XM_006511138.4"/>
</dbReference>
<dbReference type="RefSeq" id="XP_017168835.1">
    <property type="nucleotide sequence ID" value="XM_017313346.2"/>
</dbReference>
<dbReference type="RefSeq" id="XP_030100200.1">
    <property type="nucleotide sequence ID" value="XM_030244340.2"/>
</dbReference>
<dbReference type="RefSeq" id="XP_030100201.1">
    <property type="nucleotide sequence ID" value="XM_030244341.2"/>
</dbReference>
<dbReference type="SMR" id="Q8BHA9"/>
<dbReference type="BioGRID" id="231678">
    <property type="interactions" value="1"/>
</dbReference>
<dbReference type="FunCoup" id="Q8BHA9">
    <property type="interactions" value="672"/>
</dbReference>
<dbReference type="STRING" id="10090.ENSMUSP00000113210"/>
<dbReference type="GlyCosmos" id="Q8BHA9">
    <property type="glycosylation" value="3 sites, No reported glycans"/>
</dbReference>
<dbReference type="GlyGen" id="Q8BHA9">
    <property type="glycosylation" value="3 sites"/>
</dbReference>
<dbReference type="PhosphoSitePlus" id="Q8BHA9"/>
<dbReference type="PaxDb" id="10090-ENSMUSP00000108574"/>
<dbReference type="PeptideAtlas" id="Q8BHA9"/>
<dbReference type="ProteomicsDB" id="300362"/>
<dbReference type="Pumba" id="Q8BHA9"/>
<dbReference type="Antibodypedia" id="2523">
    <property type="antibodies" value="133 antibodies from 21 providers"/>
</dbReference>
<dbReference type="DNASU" id="235534"/>
<dbReference type="Ensembl" id="ENSMUST00000078478.8">
    <property type="protein sequence ID" value="ENSMUSP00000077571.2"/>
    <property type="gene ID" value="ENSMUSG00000043587.16"/>
</dbReference>
<dbReference type="Ensembl" id="ENSMUST00000112951.9">
    <property type="protein sequence ID" value="ENSMUSP00000108574.3"/>
    <property type="gene ID" value="ENSMUSG00000043587.16"/>
</dbReference>
<dbReference type="Ensembl" id="ENSMUST00000119141.8">
    <property type="protein sequence ID" value="ENSMUSP00000113489.2"/>
    <property type="gene ID" value="ENSMUSG00000043587.16"/>
</dbReference>
<dbReference type="Ensembl" id="ENSMUST00000120101.8">
    <property type="protein sequence ID" value="ENSMUSP00000113210.2"/>
    <property type="gene ID" value="ENSMUSG00000043587.16"/>
</dbReference>
<dbReference type="GeneID" id="235534"/>
<dbReference type="KEGG" id="mmu:235534"/>
<dbReference type="UCSC" id="uc009rcu.2">
    <property type="organism name" value="mouse"/>
</dbReference>
<dbReference type="AGR" id="MGI:2442444"/>
<dbReference type="CTD" id="92370"/>
<dbReference type="MGI" id="MGI:2442444">
    <property type="gene designation" value="Pxylp1"/>
</dbReference>
<dbReference type="VEuPathDB" id="HostDB:ENSMUSG00000043587"/>
<dbReference type="eggNOG" id="KOG3672">
    <property type="taxonomic scope" value="Eukaryota"/>
</dbReference>
<dbReference type="GeneTree" id="ENSGT00390000016324"/>
<dbReference type="HOGENOM" id="CLU_033855_1_0_1"/>
<dbReference type="InParanoid" id="Q8BHA9"/>
<dbReference type="OMA" id="YIWNAAE"/>
<dbReference type="OrthoDB" id="10262962at2759"/>
<dbReference type="PhylomeDB" id="Q8BHA9"/>
<dbReference type="TreeFam" id="TF318821"/>
<dbReference type="BioGRID-ORCS" id="235534">
    <property type="hits" value="3 hits in 76 CRISPR screens"/>
</dbReference>
<dbReference type="ChiTaRS" id="Pxylp1">
    <property type="organism name" value="mouse"/>
</dbReference>
<dbReference type="PRO" id="PR:Q8BHA9"/>
<dbReference type="Proteomes" id="UP000000589">
    <property type="component" value="Chromosome 9"/>
</dbReference>
<dbReference type="RNAct" id="Q8BHA9">
    <property type="molecule type" value="protein"/>
</dbReference>
<dbReference type="Bgee" id="ENSMUSG00000043587">
    <property type="expression patterns" value="Expressed in humerus cartilage element and 227 other cell types or tissues"/>
</dbReference>
<dbReference type="ExpressionAtlas" id="Q8BHA9">
    <property type="expression patterns" value="baseline and differential"/>
</dbReference>
<dbReference type="GO" id="GO:0005794">
    <property type="term" value="C:Golgi apparatus"/>
    <property type="evidence" value="ECO:0000250"/>
    <property type="project" value="UniProtKB"/>
</dbReference>
<dbReference type="GO" id="GO:0000139">
    <property type="term" value="C:Golgi membrane"/>
    <property type="evidence" value="ECO:0007669"/>
    <property type="project" value="UniProtKB-SubCell"/>
</dbReference>
<dbReference type="GO" id="GO:0016791">
    <property type="term" value="F:phosphatase activity"/>
    <property type="evidence" value="ECO:0000250"/>
    <property type="project" value="UniProtKB"/>
</dbReference>
<dbReference type="GO" id="GO:0050650">
    <property type="term" value="P:chondroitin sulfate proteoglycan biosynthetic process"/>
    <property type="evidence" value="ECO:0000250"/>
    <property type="project" value="UniProtKB"/>
</dbReference>
<dbReference type="GO" id="GO:0006024">
    <property type="term" value="P:glycosaminoglycan biosynthetic process"/>
    <property type="evidence" value="ECO:0000250"/>
    <property type="project" value="UniProtKB"/>
</dbReference>
<dbReference type="GO" id="GO:0010909">
    <property type="term" value="P:positive regulation of heparan sulfate proteoglycan biosynthetic process"/>
    <property type="evidence" value="ECO:0000250"/>
    <property type="project" value="UniProtKB"/>
</dbReference>
<dbReference type="CDD" id="cd07061">
    <property type="entry name" value="HP_HAP_like"/>
    <property type="match status" value="1"/>
</dbReference>
<dbReference type="FunFam" id="3.40.50.1240:FF:000011">
    <property type="entry name" value="2-phosphoxylose phosphatase 1"/>
    <property type="match status" value="1"/>
</dbReference>
<dbReference type="Gene3D" id="3.40.50.1240">
    <property type="entry name" value="Phosphoglycerate mutase-like"/>
    <property type="match status" value="1"/>
</dbReference>
<dbReference type="InterPro" id="IPR000560">
    <property type="entry name" value="His_Pase_clade-2"/>
</dbReference>
<dbReference type="InterPro" id="IPR029033">
    <property type="entry name" value="His_PPase_superfam"/>
</dbReference>
<dbReference type="InterPro" id="IPR050645">
    <property type="entry name" value="Histidine_acid_phosphatase"/>
</dbReference>
<dbReference type="PANTHER" id="PTHR11567:SF110">
    <property type="entry name" value="2-PHOSPHOXYLOSE PHOSPHATASE 1"/>
    <property type="match status" value="1"/>
</dbReference>
<dbReference type="PANTHER" id="PTHR11567">
    <property type="entry name" value="ACID PHOSPHATASE-RELATED"/>
    <property type="match status" value="1"/>
</dbReference>
<dbReference type="Pfam" id="PF00328">
    <property type="entry name" value="His_Phos_2"/>
    <property type="match status" value="1"/>
</dbReference>
<dbReference type="SUPFAM" id="SSF53254">
    <property type="entry name" value="Phosphoglycerate mutase-like"/>
    <property type="match status" value="1"/>
</dbReference>
<gene>
    <name evidence="6" type="primary">Pxylp1</name>
    <name type="synonym">Acpl2</name>
</gene>
<sequence>MLHRNRFLVLLALAGLLAFLSLSLQFFHLIPVSATKNGGSSKSRKRIMPDPVTEPPTVDPVYEALLYCNIPSVAEHSMEGHAPHHYKLVSVHVFIRHGDRYPLYAIPKTKRPEIDCTLVASRKPYHPKLEAFISHMLKGSGASFESPLNSLPLYPNHPLCETGELTQTGVVQHLLNGQLLRDIYLRKHKLLPNNWSSDQLYLESTGKSRTLQSGLALLYGFLPEFDWKKVYFKHQPSALFCSGSCYCPLRNQYLEKEQRRQYLLRLKNSDLERTYGEMAKIVDIPTKQLRAANPIDSMLCHFCHNVSFPCSRSGCLGMEHFKVIKTHQIEDERERHEKLLYFGYSLLGAHPILNQTVNRMQRAASGWRDELFTLYSAHDVTLSPILSALGLLEARFPRFAARLVFELWQDRQKPSEHSVRILYNGADVTFHTSFCHDFHKRSPKPMCPLENLVRFVKRDMFVALDGSSTNYYDACHGEGA</sequence>
<name>PXYP1_MOUSE</name>